<proteinExistence type="inferred from homology"/>
<dbReference type="EC" id="5.3.1.1" evidence="1"/>
<dbReference type="EMBL" id="AM884177">
    <property type="protein sequence ID" value="CAP06975.1"/>
    <property type="molecule type" value="Genomic_DNA"/>
</dbReference>
<dbReference type="RefSeq" id="WP_009873730.1">
    <property type="nucleotide sequence ID" value="NC_010280.2"/>
</dbReference>
<dbReference type="SMR" id="B0BBW0"/>
<dbReference type="KEGG" id="ctl:CTLon_0578"/>
<dbReference type="HOGENOM" id="CLU_024251_2_1_0"/>
<dbReference type="UniPathway" id="UPA00109">
    <property type="reaction ID" value="UER00189"/>
</dbReference>
<dbReference type="UniPathway" id="UPA00138"/>
<dbReference type="Proteomes" id="UP001154401">
    <property type="component" value="Chromosome"/>
</dbReference>
<dbReference type="GO" id="GO:0005829">
    <property type="term" value="C:cytosol"/>
    <property type="evidence" value="ECO:0007669"/>
    <property type="project" value="TreeGrafter"/>
</dbReference>
<dbReference type="GO" id="GO:0004807">
    <property type="term" value="F:triose-phosphate isomerase activity"/>
    <property type="evidence" value="ECO:0007669"/>
    <property type="project" value="UniProtKB-UniRule"/>
</dbReference>
<dbReference type="GO" id="GO:0006094">
    <property type="term" value="P:gluconeogenesis"/>
    <property type="evidence" value="ECO:0007669"/>
    <property type="project" value="UniProtKB-UniRule"/>
</dbReference>
<dbReference type="GO" id="GO:0046166">
    <property type="term" value="P:glyceraldehyde-3-phosphate biosynthetic process"/>
    <property type="evidence" value="ECO:0007669"/>
    <property type="project" value="TreeGrafter"/>
</dbReference>
<dbReference type="GO" id="GO:0019563">
    <property type="term" value="P:glycerol catabolic process"/>
    <property type="evidence" value="ECO:0007669"/>
    <property type="project" value="TreeGrafter"/>
</dbReference>
<dbReference type="GO" id="GO:0006096">
    <property type="term" value="P:glycolytic process"/>
    <property type="evidence" value="ECO:0007669"/>
    <property type="project" value="UniProtKB-UniRule"/>
</dbReference>
<dbReference type="CDD" id="cd00311">
    <property type="entry name" value="TIM"/>
    <property type="match status" value="1"/>
</dbReference>
<dbReference type="FunFam" id="3.20.20.70:FF:000016">
    <property type="entry name" value="Triosephosphate isomerase"/>
    <property type="match status" value="1"/>
</dbReference>
<dbReference type="Gene3D" id="3.20.20.70">
    <property type="entry name" value="Aldolase class I"/>
    <property type="match status" value="1"/>
</dbReference>
<dbReference type="HAMAP" id="MF_00147_B">
    <property type="entry name" value="TIM_B"/>
    <property type="match status" value="1"/>
</dbReference>
<dbReference type="InterPro" id="IPR013785">
    <property type="entry name" value="Aldolase_TIM"/>
</dbReference>
<dbReference type="InterPro" id="IPR035990">
    <property type="entry name" value="TIM_sf"/>
</dbReference>
<dbReference type="InterPro" id="IPR022896">
    <property type="entry name" value="TrioseP_Isoase_bac/euk"/>
</dbReference>
<dbReference type="InterPro" id="IPR000652">
    <property type="entry name" value="Triosephosphate_isomerase"/>
</dbReference>
<dbReference type="InterPro" id="IPR020861">
    <property type="entry name" value="Triosephosphate_isomerase_AS"/>
</dbReference>
<dbReference type="NCBIfam" id="TIGR00419">
    <property type="entry name" value="tim"/>
    <property type="match status" value="1"/>
</dbReference>
<dbReference type="PANTHER" id="PTHR21139">
    <property type="entry name" value="TRIOSEPHOSPHATE ISOMERASE"/>
    <property type="match status" value="1"/>
</dbReference>
<dbReference type="PANTHER" id="PTHR21139:SF42">
    <property type="entry name" value="TRIOSEPHOSPHATE ISOMERASE"/>
    <property type="match status" value="1"/>
</dbReference>
<dbReference type="Pfam" id="PF00121">
    <property type="entry name" value="TIM"/>
    <property type="match status" value="1"/>
</dbReference>
<dbReference type="SUPFAM" id="SSF51351">
    <property type="entry name" value="Triosephosphate isomerase (TIM)"/>
    <property type="match status" value="1"/>
</dbReference>
<dbReference type="PROSITE" id="PS00171">
    <property type="entry name" value="TIM_1"/>
    <property type="match status" value="1"/>
</dbReference>
<dbReference type="PROSITE" id="PS51440">
    <property type="entry name" value="TIM_2"/>
    <property type="match status" value="1"/>
</dbReference>
<accession>B0BBW0</accession>
<organism>
    <name type="scientific">Chlamydia trachomatis serovar L2b (strain UCH-1/proctitis)</name>
    <dbReference type="NCBI Taxonomy" id="471473"/>
    <lineage>
        <taxon>Bacteria</taxon>
        <taxon>Pseudomonadati</taxon>
        <taxon>Chlamydiota</taxon>
        <taxon>Chlamydiia</taxon>
        <taxon>Chlamydiales</taxon>
        <taxon>Chlamydiaceae</taxon>
        <taxon>Chlamydia/Chlamydophila group</taxon>
        <taxon>Chlamydia</taxon>
    </lineage>
</organism>
<feature type="chain" id="PRO_1000096485" description="Triosephosphate isomerase">
    <location>
        <begin position="1"/>
        <end position="274"/>
    </location>
</feature>
<feature type="active site" description="Electrophile" evidence="1">
    <location>
        <position position="118"/>
    </location>
</feature>
<feature type="active site" description="Proton acceptor" evidence="1">
    <location>
        <position position="188"/>
    </location>
</feature>
<feature type="binding site" evidence="1">
    <location>
        <begin position="31"/>
        <end position="33"/>
    </location>
    <ligand>
        <name>substrate</name>
    </ligand>
</feature>
<feature type="binding site" evidence="1">
    <location>
        <position position="194"/>
    </location>
    <ligand>
        <name>substrate</name>
    </ligand>
</feature>
<feature type="binding site" evidence="1">
    <location>
        <position position="234"/>
    </location>
    <ligand>
        <name>substrate</name>
    </ligand>
</feature>
<feature type="binding site" evidence="1">
    <location>
        <begin position="255"/>
        <end position="256"/>
    </location>
    <ligand>
        <name>substrate</name>
    </ligand>
</feature>
<comment type="function">
    <text evidence="1">Involved in the gluconeogenesis. Catalyzes stereospecifically the conversion of dihydroxyacetone phosphate (DHAP) to D-glyceraldehyde-3-phosphate (G3P).</text>
</comment>
<comment type="catalytic activity">
    <reaction evidence="1">
        <text>D-glyceraldehyde 3-phosphate = dihydroxyacetone phosphate</text>
        <dbReference type="Rhea" id="RHEA:18585"/>
        <dbReference type="ChEBI" id="CHEBI:57642"/>
        <dbReference type="ChEBI" id="CHEBI:59776"/>
        <dbReference type="EC" id="5.3.1.1"/>
    </reaction>
</comment>
<comment type="pathway">
    <text evidence="1">Carbohydrate biosynthesis; gluconeogenesis.</text>
</comment>
<comment type="pathway">
    <text evidence="1">Carbohydrate degradation; glycolysis; D-glyceraldehyde 3-phosphate from glycerone phosphate: step 1/1.</text>
</comment>
<comment type="subunit">
    <text evidence="1">Homodimer.</text>
</comment>
<comment type="subcellular location">
    <subcellularLocation>
        <location evidence="1">Cytoplasm</location>
    </subcellularLocation>
</comment>
<comment type="similarity">
    <text evidence="1">Belongs to the triosephosphate isomerase family.</text>
</comment>
<reference key="1">
    <citation type="journal article" date="2008" name="Genome Res.">
        <title>Chlamydia trachomatis: genome sequence analysis of lymphogranuloma venereum isolates.</title>
        <authorList>
            <person name="Thomson N.R."/>
            <person name="Holden M.T.G."/>
            <person name="Carder C."/>
            <person name="Lennard N."/>
            <person name="Lockey S.J."/>
            <person name="Marsh P."/>
            <person name="Skipp P."/>
            <person name="O'Connor C.D."/>
            <person name="Goodhead I."/>
            <person name="Norbertzcak H."/>
            <person name="Harris B."/>
            <person name="Ormond D."/>
            <person name="Rance R."/>
            <person name="Quail M.A."/>
            <person name="Parkhill J."/>
            <person name="Stephens R.S."/>
            <person name="Clarke I.N."/>
        </authorList>
    </citation>
    <scope>NUCLEOTIDE SEQUENCE [LARGE SCALE GENOMIC DNA]</scope>
    <source>
        <strain>UCH-1/proctitis</strain>
    </source>
</reference>
<name>TPIS_CHLTB</name>
<gene>
    <name evidence="1" type="primary">tpiA</name>
    <name type="ordered locus">CTLon_0578</name>
</gene>
<keyword id="KW-0963">Cytoplasm</keyword>
<keyword id="KW-0312">Gluconeogenesis</keyword>
<keyword id="KW-0324">Glycolysis</keyword>
<keyword id="KW-0413">Isomerase</keyword>
<sequence length="274" mass="29776">MFTDKETHRKPFPTWAHLLHSEPSKQFVFGNWKMNKTLTEAQTFLKSFLSSDILSNPQIITGIIPPFTLLSACQQAVSDSPIFLGAQTTHEADSGAFTGEISAPMLKDIGVDFVLIGHSERRHIFHEQNPVLAEKAAAAIHSGMIPVLCIGETLEEQESGATQDILLNQLTIGLSKLPEQASFILAYEPVWAIGTGKVAHPDLVQETHAFCRKTIASLFSKDIAERTPILYGGSVKADNARSLSLCPDVNGLLVGGASLSSENFLSIIQQIDIP</sequence>
<evidence type="ECO:0000255" key="1">
    <source>
        <dbReference type="HAMAP-Rule" id="MF_00147"/>
    </source>
</evidence>
<protein>
    <recommendedName>
        <fullName evidence="1">Triosephosphate isomerase</fullName>
        <shortName evidence="1">TIM</shortName>
        <shortName evidence="1">TPI</shortName>
        <ecNumber evidence="1">5.3.1.1</ecNumber>
    </recommendedName>
    <alternativeName>
        <fullName evidence="1">Triose-phosphate isomerase</fullName>
    </alternativeName>
</protein>